<feature type="chain" id="PRO_0000110279" description="NAD-dependent histone deacetylase sir2">
    <location>
        <begin position="1"/>
        <end position="475"/>
    </location>
</feature>
<feature type="domain" description="Deacetylase sirtuin-type" evidence="2">
    <location>
        <begin position="139"/>
        <end position="436"/>
    </location>
</feature>
<feature type="region of interest" description="Disordered" evidence="3">
    <location>
        <begin position="1"/>
        <end position="35"/>
    </location>
</feature>
<feature type="compositionally biased region" description="Polar residues" evidence="3">
    <location>
        <begin position="1"/>
        <end position="12"/>
    </location>
</feature>
<feature type="compositionally biased region" description="Low complexity" evidence="3">
    <location>
        <begin position="20"/>
        <end position="35"/>
    </location>
</feature>
<feature type="active site" description="Proton acceptor" evidence="2">
    <location>
        <position position="266"/>
    </location>
</feature>
<feature type="binding site" evidence="1">
    <location>
        <begin position="164"/>
        <end position="183"/>
    </location>
    <ligand>
        <name>NAD(+)</name>
        <dbReference type="ChEBI" id="CHEBI:57540"/>
    </ligand>
</feature>
<feature type="binding site" evidence="1">
    <location>
        <begin position="246"/>
        <end position="249"/>
    </location>
    <ligand>
        <name>NAD(+)</name>
        <dbReference type="ChEBI" id="CHEBI:57540"/>
    </ligand>
</feature>
<feature type="binding site" evidence="2">
    <location>
        <position position="274"/>
    </location>
    <ligand>
        <name>Zn(2+)</name>
        <dbReference type="ChEBI" id="CHEBI:29105"/>
    </ligand>
</feature>
<feature type="binding site" evidence="2">
    <location>
        <position position="277"/>
    </location>
    <ligand>
        <name>Zn(2+)</name>
        <dbReference type="ChEBI" id="CHEBI:29105"/>
    </ligand>
</feature>
<feature type="binding site" evidence="2">
    <location>
        <position position="298"/>
    </location>
    <ligand>
        <name>Zn(2+)</name>
        <dbReference type="ChEBI" id="CHEBI:29105"/>
    </ligand>
</feature>
<feature type="binding site" evidence="2">
    <location>
        <position position="301"/>
    </location>
    <ligand>
        <name>Zn(2+)</name>
        <dbReference type="ChEBI" id="CHEBI:29105"/>
    </ligand>
</feature>
<feature type="binding site" evidence="1">
    <location>
        <begin position="373"/>
        <end position="375"/>
    </location>
    <ligand>
        <name>NAD(+)</name>
        <dbReference type="ChEBI" id="CHEBI:57540"/>
    </ligand>
</feature>
<feature type="binding site" evidence="1">
    <location>
        <begin position="398"/>
        <end position="400"/>
    </location>
    <ligand>
        <name>NAD(+)</name>
        <dbReference type="ChEBI" id="CHEBI:57540"/>
    </ligand>
</feature>
<feature type="binding site" evidence="1">
    <location>
        <position position="416"/>
    </location>
    <ligand>
        <name>NAD(+)</name>
        <dbReference type="ChEBI" id="CHEBI:57540"/>
    </ligand>
</feature>
<feature type="modified residue" description="Phosphoserine" evidence="6">
    <location>
        <position position="55"/>
    </location>
</feature>
<dbReference type="EC" id="2.3.1.286" evidence="2"/>
<dbReference type="EMBL" id="CU329671">
    <property type="protein sequence ID" value="CAG47122.1"/>
    <property type="molecule type" value="Genomic_DNA"/>
</dbReference>
<dbReference type="PIR" id="T39571">
    <property type="entry name" value="T39571"/>
</dbReference>
<dbReference type="RefSeq" id="NP_001018840.1">
    <property type="nucleotide sequence ID" value="NM_001022423.2"/>
</dbReference>
<dbReference type="SMR" id="O94640"/>
<dbReference type="BioGRID" id="280418">
    <property type="interactions" value="62"/>
</dbReference>
<dbReference type="FunCoup" id="O94640">
    <property type="interactions" value="356"/>
</dbReference>
<dbReference type="IntAct" id="O94640">
    <property type="interactions" value="1"/>
</dbReference>
<dbReference type="STRING" id="284812.O94640"/>
<dbReference type="iPTMnet" id="O94640"/>
<dbReference type="SwissPalm" id="O94640"/>
<dbReference type="PaxDb" id="4896-SPBC16D10.07c.1"/>
<dbReference type="EnsemblFungi" id="SPBC16D10.07c.1">
    <property type="protein sequence ID" value="SPBC16D10.07c.1:pep"/>
    <property type="gene ID" value="SPBC16D10.07c"/>
</dbReference>
<dbReference type="GeneID" id="3361342"/>
<dbReference type="KEGG" id="spo:3361342"/>
<dbReference type="PomBase" id="SPBC16D10.07c">
    <property type="gene designation" value="sir2"/>
</dbReference>
<dbReference type="VEuPathDB" id="FungiDB:SPBC16D10.07c"/>
<dbReference type="eggNOG" id="KOG2684">
    <property type="taxonomic scope" value="Eukaryota"/>
</dbReference>
<dbReference type="HOGENOM" id="CLU_023643_5_3_1"/>
<dbReference type="InParanoid" id="O94640"/>
<dbReference type="OMA" id="PTHEFIR"/>
<dbReference type="PhylomeDB" id="O94640"/>
<dbReference type="Reactome" id="R-SPO-427359">
    <property type="pathway name" value="SIRT1 negatively regulates rRNA expression"/>
</dbReference>
<dbReference type="PRO" id="PR:O94640"/>
<dbReference type="Proteomes" id="UP000002485">
    <property type="component" value="Chromosome II"/>
</dbReference>
<dbReference type="GO" id="GO:0000785">
    <property type="term" value="C:chromatin"/>
    <property type="evidence" value="ECO:0000314"/>
    <property type="project" value="PomBase"/>
</dbReference>
<dbReference type="GO" id="GO:0099115">
    <property type="term" value="C:chromosome, subtelomeric region"/>
    <property type="evidence" value="ECO:0000314"/>
    <property type="project" value="PomBase"/>
</dbReference>
<dbReference type="GO" id="GO:0031934">
    <property type="term" value="C:mating-type region heterochromatin"/>
    <property type="evidence" value="ECO:0000314"/>
    <property type="project" value="PomBase"/>
</dbReference>
<dbReference type="GO" id="GO:0005634">
    <property type="term" value="C:nucleus"/>
    <property type="evidence" value="ECO:0000314"/>
    <property type="project" value="UniProtKB"/>
</dbReference>
<dbReference type="GO" id="GO:0005721">
    <property type="term" value="C:pericentric heterochromatin"/>
    <property type="evidence" value="ECO:0000314"/>
    <property type="project" value="PomBase"/>
</dbReference>
<dbReference type="GO" id="GO:0033553">
    <property type="term" value="C:rDNA heterochromatin"/>
    <property type="evidence" value="ECO:0000314"/>
    <property type="project" value="PomBase"/>
</dbReference>
<dbReference type="GO" id="GO:0034967">
    <property type="term" value="C:Set3 complex"/>
    <property type="evidence" value="ECO:0000266"/>
    <property type="project" value="PomBase"/>
</dbReference>
<dbReference type="GO" id="GO:0140720">
    <property type="term" value="C:subtelomeric heterochromatin"/>
    <property type="evidence" value="ECO:0000269"/>
    <property type="project" value="PomBase"/>
</dbReference>
<dbReference type="GO" id="GO:0004407">
    <property type="term" value="F:histone deacetylase activity"/>
    <property type="evidence" value="ECO:0000314"/>
    <property type="project" value="UniProtKB"/>
</dbReference>
<dbReference type="GO" id="GO:0032041">
    <property type="term" value="F:histone H3K14 deacetylase activity, NAD-dependent"/>
    <property type="evidence" value="ECO:0000314"/>
    <property type="project" value="PomBase"/>
</dbReference>
<dbReference type="GO" id="GO:0141222">
    <property type="term" value="F:histone H3K4 deacetylase activity, NAD-dependent"/>
    <property type="evidence" value="ECO:0000314"/>
    <property type="project" value="PomBase"/>
</dbReference>
<dbReference type="GO" id="GO:0046969">
    <property type="term" value="F:histone H3K9 deacetylase activity, NAD-dependent"/>
    <property type="evidence" value="ECO:0000314"/>
    <property type="project" value="PomBase"/>
</dbReference>
<dbReference type="GO" id="GO:0046970">
    <property type="term" value="F:histone H4K16 deacetylase activity, NAD-dependent"/>
    <property type="evidence" value="ECO:0000314"/>
    <property type="project" value="PomBase"/>
</dbReference>
<dbReference type="GO" id="GO:0046872">
    <property type="term" value="F:metal ion binding"/>
    <property type="evidence" value="ECO:0007669"/>
    <property type="project" value="UniProtKB-KW"/>
</dbReference>
<dbReference type="GO" id="GO:0070403">
    <property type="term" value="F:NAD+ binding"/>
    <property type="evidence" value="ECO:0000318"/>
    <property type="project" value="GO_Central"/>
</dbReference>
<dbReference type="GO" id="GO:0006281">
    <property type="term" value="P:DNA repair"/>
    <property type="evidence" value="ECO:0007669"/>
    <property type="project" value="UniProtKB-KW"/>
</dbReference>
<dbReference type="GO" id="GO:0040029">
    <property type="term" value="P:epigenetic regulation of gene expression"/>
    <property type="evidence" value="ECO:0000315"/>
    <property type="project" value="PomBase"/>
</dbReference>
<dbReference type="GO" id="GO:0031507">
    <property type="term" value="P:heterochromatin formation"/>
    <property type="evidence" value="ECO:0000315"/>
    <property type="project" value="UniProtKB"/>
</dbReference>
<dbReference type="GO" id="GO:0045892">
    <property type="term" value="P:negative regulation of DNA-templated transcription"/>
    <property type="evidence" value="ECO:0007669"/>
    <property type="project" value="GOC"/>
</dbReference>
<dbReference type="GO" id="GO:0030466">
    <property type="term" value="P:silent mating-type cassette heterochromatin formation"/>
    <property type="evidence" value="ECO:0000269"/>
    <property type="project" value="PomBase"/>
</dbReference>
<dbReference type="GO" id="GO:1902794">
    <property type="term" value="P:siRNA-independent facultative heterochromatin formation"/>
    <property type="evidence" value="ECO:0000315"/>
    <property type="project" value="PomBase"/>
</dbReference>
<dbReference type="GO" id="GO:0031509">
    <property type="term" value="P:subtelomeric heterochromatin formation"/>
    <property type="evidence" value="ECO:0000269"/>
    <property type="project" value="PomBase"/>
</dbReference>
<dbReference type="CDD" id="cd01408">
    <property type="entry name" value="SIRT1"/>
    <property type="match status" value="1"/>
</dbReference>
<dbReference type="Gene3D" id="3.30.1600.10">
    <property type="entry name" value="SIR2/SIRT2 'Small Domain"/>
    <property type="match status" value="1"/>
</dbReference>
<dbReference type="Gene3D" id="3.40.50.1220">
    <property type="entry name" value="TPP-binding domain"/>
    <property type="match status" value="1"/>
</dbReference>
<dbReference type="InterPro" id="IPR029035">
    <property type="entry name" value="DHS-like_NAD/FAD-binding_dom"/>
</dbReference>
<dbReference type="InterPro" id="IPR007654">
    <property type="entry name" value="NAD-dep_histone_deAcase_SIR2_N"/>
</dbReference>
<dbReference type="InterPro" id="IPR050134">
    <property type="entry name" value="NAD-dep_sirtuin_deacylases"/>
</dbReference>
<dbReference type="InterPro" id="IPR003000">
    <property type="entry name" value="Sirtuin"/>
</dbReference>
<dbReference type="InterPro" id="IPR026591">
    <property type="entry name" value="Sirtuin_cat_small_dom_sf"/>
</dbReference>
<dbReference type="InterPro" id="IPR026590">
    <property type="entry name" value="Ssirtuin_cat_dom"/>
</dbReference>
<dbReference type="PANTHER" id="PTHR11085:SF9">
    <property type="entry name" value="NAD-DEPENDENT PROTEIN DEACETYLASE SIRTUIN-1"/>
    <property type="match status" value="1"/>
</dbReference>
<dbReference type="PANTHER" id="PTHR11085">
    <property type="entry name" value="NAD-DEPENDENT PROTEIN DEACYLASE SIRTUIN-5, MITOCHONDRIAL-RELATED"/>
    <property type="match status" value="1"/>
</dbReference>
<dbReference type="Pfam" id="PF04574">
    <property type="entry name" value="DUF592"/>
    <property type="match status" value="1"/>
</dbReference>
<dbReference type="Pfam" id="PF02146">
    <property type="entry name" value="SIR2"/>
    <property type="match status" value="1"/>
</dbReference>
<dbReference type="SUPFAM" id="SSF52467">
    <property type="entry name" value="DHS-like NAD/FAD-binding domain"/>
    <property type="match status" value="1"/>
</dbReference>
<dbReference type="PROSITE" id="PS50305">
    <property type="entry name" value="SIRTUIN"/>
    <property type="match status" value="1"/>
</dbReference>
<proteinExistence type="evidence at protein level"/>
<gene>
    <name type="primary">sir2</name>
    <name type="ORF">SPBC16D10.07c</name>
</gene>
<organism>
    <name type="scientific">Schizosaccharomyces pombe (strain 972 / ATCC 24843)</name>
    <name type="common">Fission yeast</name>
    <dbReference type="NCBI Taxonomy" id="284812"/>
    <lineage>
        <taxon>Eukaryota</taxon>
        <taxon>Fungi</taxon>
        <taxon>Dikarya</taxon>
        <taxon>Ascomycota</taxon>
        <taxon>Taphrinomycotina</taxon>
        <taxon>Schizosaccharomycetes</taxon>
        <taxon>Schizosaccharomycetales</taxon>
        <taxon>Schizosaccharomycetaceae</taxon>
        <taxon>Schizosaccharomyces</taxon>
    </lineage>
</organism>
<keyword id="KW-0137">Centromere</keyword>
<keyword id="KW-0156">Chromatin regulator</keyword>
<keyword id="KW-0158">Chromosome</keyword>
<keyword id="KW-0227">DNA damage</keyword>
<keyword id="KW-0234">DNA repair</keyword>
<keyword id="KW-0479">Metal-binding</keyword>
<keyword id="KW-0520">NAD</keyword>
<keyword id="KW-0539">Nucleus</keyword>
<keyword id="KW-0597">Phosphoprotein</keyword>
<keyword id="KW-1185">Reference proteome</keyword>
<keyword id="KW-0678">Repressor</keyword>
<keyword id="KW-0779">Telomere</keyword>
<keyword id="KW-0804">Transcription</keyword>
<keyword id="KW-0805">Transcription regulation</keyword>
<keyword id="KW-0808">Transferase</keyword>
<keyword id="KW-0862">Zinc</keyword>
<name>SIR2_SCHPO</name>
<comment type="function">
    <text evidence="4 5">Involved in silencing within the mating-type region, at the telomeres, and according to PubMed:12867036 also within centromeric DNA regions. Required for the localization of swi6 to the telomeres, silent mating type region, and according to PubMed:12867036 to the centromeric DNA regions. According to PubMed:15545655 not required for the localization of swi6 to centromeric foci. Deacetylates histone H3 on 'Lys-9' and 'Lys-16' of histone H4. This has a direct role in heterochromatin assembly.</text>
</comment>
<comment type="catalytic activity">
    <reaction evidence="2">
        <text>N(6)-acetyl-L-lysyl-[protein] + NAD(+) + H2O = 2''-O-acetyl-ADP-D-ribose + nicotinamide + L-lysyl-[protein]</text>
        <dbReference type="Rhea" id="RHEA:43636"/>
        <dbReference type="Rhea" id="RHEA-COMP:9752"/>
        <dbReference type="Rhea" id="RHEA-COMP:10731"/>
        <dbReference type="ChEBI" id="CHEBI:15377"/>
        <dbReference type="ChEBI" id="CHEBI:17154"/>
        <dbReference type="ChEBI" id="CHEBI:29969"/>
        <dbReference type="ChEBI" id="CHEBI:57540"/>
        <dbReference type="ChEBI" id="CHEBI:61930"/>
        <dbReference type="ChEBI" id="CHEBI:83767"/>
        <dbReference type="EC" id="2.3.1.286"/>
    </reaction>
</comment>
<comment type="cofactor">
    <cofactor evidence="1">
        <name>Zn(2+)</name>
        <dbReference type="ChEBI" id="CHEBI:29105"/>
    </cofactor>
    <text evidence="1">Binds 1 zinc ion per subunit.</text>
</comment>
<comment type="subcellular location">
    <subcellularLocation>
        <location evidence="5">Nucleus</location>
    </subcellularLocation>
    <subcellularLocation>
        <location evidence="5">Chromosome</location>
        <location evidence="5">Centromere</location>
    </subcellularLocation>
    <subcellularLocation>
        <location evidence="5">Chromosome</location>
        <location evidence="5">Telomere</location>
    </subcellularLocation>
    <text>Nuclear throughout the cell cycle. Binds to centromeres, telomeric sites and sites between the silent mating-type loci.</text>
</comment>
<comment type="similarity">
    <text evidence="7">Belongs to the sirtuin family. Class I subfamily.</text>
</comment>
<sequence>MASNPLDNNMPTTPVEEKIPVASYSPSSSGSSSGASLLVDIMCGSKETEDEEVDSDEWDKPETENISDLDERSEMVRYLRASGYAKFLEKYLIEEELPVRSILKKLGINLPSALEEFEDIDLLPLLKEVLKREVARRIKLPHFNTFEDVVNLLKKAKNVVVLVGAGISTSLGILDFRSDNGFYARLARHGLSEPSEMFDIHTFRENPEIFYTFARDLLPETNHYSPSHAFIRLLEKKNKLSTLFTQNIDNLEKKTGLSDNKIIQCHGSFATATCIKCKHKVDGSELYEDIRNQRVSYCNECGKPPLKLRRVGQNKKEKHYFSDGDSESSEDDLAQPGIMKPDITFFGEALPDSFFNKVGSGELEETDLLICIGTSLKVAPVSELISVIPPTTPQIYISRTPVRHTQFDVNFLSPYCDWVIVEICKRAGWLNELQALCDLPECHSGSKTRAFETDLDIKFEEPSTYHITSTTNGSC</sequence>
<reference key="1">
    <citation type="journal article" date="2005" name="Genetics">
        <title>Conserved locus-specific silencing functions of Schizosaccharomyces pombe sir2+.</title>
        <authorList>
            <person name="Freeman-Cook L.L."/>
            <person name="Gomez E.B."/>
            <person name="Spedale E.J."/>
            <person name="Marlett J."/>
            <person name="Forsburg S.L."/>
            <person name="Pillus L."/>
            <person name="Laurenson P."/>
        </authorList>
    </citation>
    <scope>NUCLEOTIDE SEQUENCE [MRNA]</scope>
    <scope>FUNCTION</scope>
    <scope>SUBCELLULAR LOCATION</scope>
</reference>
<reference key="2">
    <citation type="journal article" date="2002" name="Nature">
        <title>The genome sequence of Schizosaccharomyces pombe.</title>
        <authorList>
            <person name="Wood V."/>
            <person name="Gwilliam R."/>
            <person name="Rajandream M.A."/>
            <person name="Lyne M.H."/>
            <person name="Lyne R."/>
            <person name="Stewart A."/>
            <person name="Sgouros J.G."/>
            <person name="Peat N."/>
            <person name="Hayles J."/>
            <person name="Baker S.G."/>
            <person name="Basham D."/>
            <person name="Bowman S."/>
            <person name="Brooks K."/>
            <person name="Brown D."/>
            <person name="Brown S."/>
            <person name="Chillingworth T."/>
            <person name="Churcher C.M."/>
            <person name="Collins M."/>
            <person name="Connor R."/>
            <person name="Cronin A."/>
            <person name="Davis P."/>
            <person name="Feltwell T."/>
            <person name="Fraser A."/>
            <person name="Gentles S."/>
            <person name="Goble A."/>
            <person name="Hamlin N."/>
            <person name="Harris D.E."/>
            <person name="Hidalgo J."/>
            <person name="Hodgson G."/>
            <person name="Holroyd S."/>
            <person name="Hornsby T."/>
            <person name="Howarth S."/>
            <person name="Huckle E.J."/>
            <person name="Hunt S."/>
            <person name="Jagels K."/>
            <person name="James K.D."/>
            <person name="Jones L."/>
            <person name="Jones M."/>
            <person name="Leather S."/>
            <person name="McDonald S."/>
            <person name="McLean J."/>
            <person name="Mooney P."/>
            <person name="Moule S."/>
            <person name="Mungall K.L."/>
            <person name="Murphy L.D."/>
            <person name="Niblett D."/>
            <person name="Odell C."/>
            <person name="Oliver K."/>
            <person name="O'Neil S."/>
            <person name="Pearson D."/>
            <person name="Quail M.A."/>
            <person name="Rabbinowitsch E."/>
            <person name="Rutherford K.M."/>
            <person name="Rutter S."/>
            <person name="Saunders D."/>
            <person name="Seeger K."/>
            <person name="Sharp S."/>
            <person name="Skelton J."/>
            <person name="Simmonds M.N."/>
            <person name="Squares R."/>
            <person name="Squares S."/>
            <person name="Stevens K."/>
            <person name="Taylor K."/>
            <person name="Taylor R.G."/>
            <person name="Tivey A."/>
            <person name="Walsh S.V."/>
            <person name="Warren T."/>
            <person name="Whitehead S."/>
            <person name="Woodward J.R."/>
            <person name="Volckaert G."/>
            <person name="Aert R."/>
            <person name="Robben J."/>
            <person name="Grymonprez B."/>
            <person name="Weltjens I."/>
            <person name="Vanstreels E."/>
            <person name="Rieger M."/>
            <person name="Schaefer M."/>
            <person name="Mueller-Auer S."/>
            <person name="Gabel C."/>
            <person name="Fuchs M."/>
            <person name="Duesterhoeft A."/>
            <person name="Fritzc C."/>
            <person name="Holzer E."/>
            <person name="Moestl D."/>
            <person name="Hilbert H."/>
            <person name="Borzym K."/>
            <person name="Langer I."/>
            <person name="Beck A."/>
            <person name="Lehrach H."/>
            <person name="Reinhardt R."/>
            <person name="Pohl T.M."/>
            <person name="Eger P."/>
            <person name="Zimmermann W."/>
            <person name="Wedler H."/>
            <person name="Wambutt R."/>
            <person name="Purnelle B."/>
            <person name="Goffeau A."/>
            <person name="Cadieu E."/>
            <person name="Dreano S."/>
            <person name="Gloux S."/>
            <person name="Lelaure V."/>
            <person name="Mottier S."/>
            <person name="Galibert F."/>
            <person name="Aves S.J."/>
            <person name="Xiang Z."/>
            <person name="Hunt C."/>
            <person name="Moore K."/>
            <person name="Hurst S.M."/>
            <person name="Lucas M."/>
            <person name="Rochet M."/>
            <person name="Gaillardin C."/>
            <person name="Tallada V.A."/>
            <person name="Garzon A."/>
            <person name="Thode G."/>
            <person name="Daga R.R."/>
            <person name="Cruzado L."/>
            <person name="Jimenez J."/>
            <person name="Sanchez M."/>
            <person name="del Rey F."/>
            <person name="Benito J."/>
            <person name="Dominguez A."/>
            <person name="Revuelta J.L."/>
            <person name="Moreno S."/>
            <person name="Armstrong J."/>
            <person name="Forsburg S.L."/>
            <person name="Cerutti L."/>
            <person name="Lowe T."/>
            <person name="McCombie W.R."/>
            <person name="Paulsen I."/>
            <person name="Potashkin J."/>
            <person name="Shpakovski G.V."/>
            <person name="Ussery D."/>
            <person name="Barrell B.G."/>
            <person name="Nurse P."/>
        </authorList>
    </citation>
    <scope>NUCLEOTIDE SEQUENCE [LARGE SCALE GENOMIC DNA]</scope>
    <source>
        <strain>972 / ATCC 24843</strain>
    </source>
</reference>
<reference key="3">
    <citation type="submission" date="2004-06" db="EMBL/GenBank/DDBJ databases">
        <authorList>
            <person name="Wood V."/>
            <person name="Rajandream M.A."/>
            <person name="Barrell B.G."/>
            <person name="Brown D."/>
            <person name="Churcher C.M."/>
        </authorList>
    </citation>
    <scope>SEQUENCE REVISION</scope>
</reference>
<reference key="4">
    <citation type="journal article" date="2003" name="Curr. Biol.">
        <title>Sir2 regulates histone H3 lysine 9 methylation and heterochromatin assembly in fission yeast.</title>
        <authorList>
            <person name="Shankaranarayana G.D."/>
            <person name="Motamedi M.R."/>
            <person name="Moazed D."/>
            <person name="Grewal S.I.S."/>
        </authorList>
    </citation>
    <scope>FUNCTION</scope>
</reference>
<reference key="5">
    <citation type="journal article" date="2008" name="J. Proteome Res.">
        <title>Phosphoproteome analysis of fission yeast.</title>
        <authorList>
            <person name="Wilson-Grady J.T."/>
            <person name="Villen J."/>
            <person name="Gygi S.P."/>
        </authorList>
    </citation>
    <scope>PHOSPHORYLATION [LARGE SCALE ANALYSIS] AT SER-55</scope>
    <scope>IDENTIFICATION BY MASS SPECTROMETRY</scope>
</reference>
<accession>O94640</accession>
<accession>Q6H8I3</accession>
<protein>
    <recommendedName>
        <fullName>NAD-dependent histone deacetylase sir2</fullName>
        <ecNumber evidence="2">2.3.1.286</ecNumber>
    </recommendedName>
    <alternativeName>
        <fullName>Regulatory protein sir2</fullName>
    </alternativeName>
    <alternativeName>
        <fullName>Silent information regulator 2</fullName>
    </alternativeName>
</protein>
<evidence type="ECO:0000250" key="1"/>
<evidence type="ECO:0000255" key="2">
    <source>
        <dbReference type="PROSITE-ProRule" id="PRU00236"/>
    </source>
</evidence>
<evidence type="ECO:0000256" key="3">
    <source>
        <dbReference type="SAM" id="MobiDB-lite"/>
    </source>
</evidence>
<evidence type="ECO:0000269" key="4">
    <source>
    </source>
</evidence>
<evidence type="ECO:0000269" key="5">
    <source>
    </source>
</evidence>
<evidence type="ECO:0000269" key="6">
    <source>
    </source>
</evidence>
<evidence type="ECO:0000305" key="7"/>